<sequence>MKQSLAVKTFEDLFAELSERARTRPTDSATVASLDGGIHALGKKILEEAGEVWLAAEHEPKEVLAEEISQLLYWTQVLMISRGLSLDDVYRKL</sequence>
<gene>
    <name type="primary">hisE</name>
    <name type="ordered locus">ML1309</name>
    <name type="ORF">B2126_C2_204</name>
    <name type="ORF">MLCB2533.06</name>
</gene>
<comment type="catalytic activity">
    <reaction>
        <text>1-(5-phospho-beta-D-ribosyl)-ATP + H2O = 1-(5-phospho-beta-D-ribosyl)-5'-AMP + diphosphate + H(+)</text>
        <dbReference type="Rhea" id="RHEA:22828"/>
        <dbReference type="ChEBI" id="CHEBI:15377"/>
        <dbReference type="ChEBI" id="CHEBI:15378"/>
        <dbReference type="ChEBI" id="CHEBI:33019"/>
        <dbReference type="ChEBI" id="CHEBI:59457"/>
        <dbReference type="ChEBI" id="CHEBI:73183"/>
        <dbReference type="EC" id="3.6.1.31"/>
    </reaction>
</comment>
<comment type="pathway">
    <text>Amino-acid biosynthesis; L-histidine biosynthesis; L-histidine from 5-phospho-alpha-D-ribose 1-diphosphate: step 2/9.</text>
</comment>
<comment type="subcellular location">
    <subcellularLocation>
        <location evidence="1">Cytoplasm</location>
    </subcellularLocation>
</comment>
<comment type="similarity">
    <text evidence="2">Belongs to the PRA-PH family.</text>
</comment>
<comment type="sequence caution" evidence="2">
    <conflict type="erroneous initiation">
        <sequence resource="EMBL-CDS" id="AAA17196"/>
    </conflict>
</comment>
<comment type="sequence caution" evidence="2">
    <conflict type="erroneous initiation">
        <sequence resource="EMBL-CDS" id="CAA22920"/>
    </conflict>
</comment>
<keyword id="KW-0028">Amino-acid biosynthesis</keyword>
<keyword id="KW-0067">ATP-binding</keyword>
<keyword id="KW-0963">Cytoplasm</keyword>
<keyword id="KW-0368">Histidine biosynthesis</keyword>
<keyword id="KW-0378">Hydrolase</keyword>
<keyword id="KW-0547">Nucleotide-binding</keyword>
<keyword id="KW-1185">Reference proteome</keyword>
<feature type="chain" id="PRO_0000136369" description="Phosphoribosyl-ATP pyrophosphatase">
    <location>
        <begin position="1"/>
        <end position="93"/>
    </location>
</feature>
<accession>Q49786</accession>
<reference key="1">
    <citation type="submission" date="1994-03" db="EMBL/GenBank/DDBJ databases">
        <authorList>
            <person name="Smith D.R."/>
            <person name="Robison K."/>
        </authorList>
    </citation>
    <scope>NUCLEOTIDE SEQUENCE [GENOMIC DNA]</scope>
</reference>
<reference key="2">
    <citation type="journal article" date="2001" name="Nature">
        <title>Massive gene decay in the leprosy bacillus.</title>
        <authorList>
            <person name="Cole S.T."/>
            <person name="Eiglmeier K."/>
            <person name="Parkhill J."/>
            <person name="James K.D."/>
            <person name="Thomson N.R."/>
            <person name="Wheeler P.R."/>
            <person name="Honore N."/>
            <person name="Garnier T."/>
            <person name="Churcher C.M."/>
            <person name="Harris D.E."/>
            <person name="Mungall K.L."/>
            <person name="Basham D."/>
            <person name="Brown D."/>
            <person name="Chillingworth T."/>
            <person name="Connor R."/>
            <person name="Davies R.M."/>
            <person name="Devlin K."/>
            <person name="Duthoy S."/>
            <person name="Feltwell T."/>
            <person name="Fraser A."/>
            <person name="Hamlin N."/>
            <person name="Holroyd S."/>
            <person name="Hornsby T."/>
            <person name="Jagels K."/>
            <person name="Lacroix C."/>
            <person name="Maclean J."/>
            <person name="Moule S."/>
            <person name="Murphy L.D."/>
            <person name="Oliver K."/>
            <person name="Quail M.A."/>
            <person name="Rajandream M.A."/>
            <person name="Rutherford K.M."/>
            <person name="Rutter S."/>
            <person name="Seeger K."/>
            <person name="Simon S."/>
            <person name="Simmonds M."/>
            <person name="Skelton J."/>
            <person name="Squares R."/>
            <person name="Squares S."/>
            <person name="Stevens K."/>
            <person name="Taylor K."/>
            <person name="Whitehead S."/>
            <person name="Woodward J.R."/>
            <person name="Barrell B.G."/>
        </authorList>
    </citation>
    <scope>NUCLEOTIDE SEQUENCE [LARGE SCALE GENOMIC DNA]</scope>
    <source>
        <strain>TN</strain>
    </source>
</reference>
<name>HIS2_MYCLE</name>
<evidence type="ECO:0000250" key="1"/>
<evidence type="ECO:0000305" key="2"/>
<dbReference type="EC" id="3.6.1.31"/>
<dbReference type="EMBL" id="U00017">
    <property type="protein sequence ID" value="AAA17196.1"/>
    <property type="status" value="ALT_INIT"/>
    <property type="molecule type" value="Genomic_DNA"/>
</dbReference>
<dbReference type="EMBL" id="AL035310">
    <property type="protein sequence ID" value="CAA22920.1"/>
    <property type="status" value="ALT_INIT"/>
    <property type="molecule type" value="Genomic_DNA"/>
</dbReference>
<dbReference type="EMBL" id="AL583921">
    <property type="protein sequence ID" value="CAC31690.1"/>
    <property type="molecule type" value="Genomic_DNA"/>
</dbReference>
<dbReference type="PIR" id="G87072">
    <property type="entry name" value="G87072"/>
</dbReference>
<dbReference type="PIR" id="S72856">
    <property type="entry name" value="S72856"/>
</dbReference>
<dbReference type="RefSeq" id="NP_301941.1">
    <property type="nucleotide sequence ID" value="NC_002677.1"/>
</dbReference>
<dbReference type="RefSeq" id="WP_010908262.1">
    <property type="nucleotide sequence ID" value="NC_002677.1"/>
</dbReference>
<dbReference type="SMR" id="Q49786"/>
<dbReference type="STRING" id="272631.gene:17575143"/>
<dbReference type="KEGG" id="mle:ML1309"/>
<dbReference type="PATRIC" id="fig|272631.5.peg.2415"/>
<dbReference type="Leproma" id="ML1309"/>
<dbReference type="eggNOG" id="COG0140">
    <property type="taxonomic scope" value="Bacteria"/>
</dbReference>
<dbReference type="HOGENOM" id="CLU_123337_2_0_11"/>
<dbReference type="OrthoDB" id="3212875at2"/>
<dbReference type="UniPathway" id="UPA00031">
    <property type="reaction ID" value="UER00007"/>
</dbReference>
<dbReference type="Proteomes" id="UP000000806">
    <property type="component" value="Chromosome"/>
</dbReference>
<dbReference type="GO" id="GO:0005737">
    <property type="term" value="C:cytoplasm"/>
    <property type="evidence" value="ECO:0007669"/>
    <property type="project" value="UniProtKB-SubCell"/>
</dbReference>
<dbReference type="GO" id="GO:0005524">
    <property type="term" value="F:ATP binding"/>
    <property type="evidence" value="ECO:0007669"/>
    <property type="project" value="UniProtKB-KW"/>
</dbReference>
<dbReference type="GO" id="GO:0004636">
    <property type="term" value="F:phosphoribosyl-ATP diphosphatase activity"/>
    <property type="evidence" value="ECO:0007669"/>
    <property type="project" value="UniProtKB-UniRule"/>
</dbReference>
<dbReference type="GO" id="GO:0000105">
    <property type="term" value="P:L-histidine biosynthetic process"/>
    <property type="evidence" value="ECO:0007669"/>
    <property type="project" value="UniProtKB-UniRule"/>
</dbReference>
<dbReference type="CDD" id="cd11547">
    <property type="entry name" value="NTP-PPase_HisE"/>
    <property type="match status" value="1"/>
</dbReference>
<dbReference type="Gene3D" id="1.10.287.1080">
    <property type="entry name" value="MazG-like"/>
    <property type="match status" value="1"/>
</dbReference>
<dbReference type="HAMAP" id="MF_01020">
    <property type="entry name" value="HisE"/>
    <property type="match status" value="1"/>
</dbReference>
<dbReference type="InterPro" id="IPR008179">
    <property type="entry name" value="HisE"/>
</dbReference>
<dbReference type="InterPro" id="IPR021130">
    <property type="entry name" value="PRib-ATP_PPHydrolase-like"/>
</dbReference>
<dbReference type="NCBIfam" id="TIGR03188">
    <property type="entry name" value="histidine_hisI"/>
    <property type="match status" value="1"/>
</dbReference>
<dbReference type="NCBIfam" id="NF001610">
    <property type="entry name" value="PRK00400.1-1"/>
    <property type="match status" value="1"/>
</dbReference>
<dbReference type="PANTHER" id="PTHR42945">
    <property type="entry name" value="HISTIDINE BIOSYNTHESIS BIFUNCTIONAL PROTEIN"/>
    <property type="match status" value="1"/>
</dbReference>
<dbReference type="PANTHER" id="PTHR42945:SF1">
    <property type="entry name" value="HISTIDINE BIOSYNTHESIS BIFUNCTIONAL PROTEIN HIS7"/>
    <property type="match status" value="1"/>
</dbReference>
<dbReference type="Pfam" id="PF01503">
    <property type="entry name" value="PRA-PH"/>
    <property type="match status" value="1"/>
</dbReference>
<dbReference type="SUPFAM" id="SSF101386">
    <property type="entry name" value="all-alpha NTP pyrophosphatases"/>
    <property type="match status" value="1"/>
</dbReference>
<proteinExistence type="inferred from homology"/>
<protein>
    <recommendedName>
        <fullName>Phosphoribosyl-ATP pyrophosphatase</fullName>
        <shortName>PRA-PH</shortName>
        <ecNumber>3.6.1.31</ecNumber>
    </recommendedName>
</protein>
<organism>
    <name type="scientific">Mycobacterium leprae (strain TN)</name>
    <dbReference type="NCBI Taxonomy" id="272631"/>
    <lineage>
        <taxon>Bacteria</taxon>
        <taxon>Bacillati</taxon>
        <taxon>Actinomycetota</taxon>
        <taxon>Actinomycetes</taxon>
        <taxon>Mycobacteriales</taxon>
        <taxon>Mycobacteriaceae</taxon>
        <taxon>Mycobacterium</taxon>
    </lineage>
</organism>